<evidence type="ECO:0000255" key="1"/>
<evidence type="ECO:0000256" key="2">
    <source>
        <dbReference type="SAM" id="MobiDB-lite"/>
    </source>
</evidence>
<evidence type="ECO:0000269" key="3">
    <source>
    </source>
</evidence>
<evidence type="ECO:0000305" key="4"/>
<protein>
    <recommendedName>
        <fullName>SH3 domain-binding glutamic acid-rich protein homolog</fullName>
        <shortName>SH3BGR protein</shortName>
    </recommendedName>
</protein>
<dbReference type="EMBL" id="AJ272505">
    <property type="protein sequence ID" value="CAB76915.1"/>
    <property type="molecule type" value="mRNA"/>
</dbReference>
<dbReference type="EMBL" id="AE014296">
    <property type="protein sequence ID" value="AAN12061.1"/>
    <property type="molecule type" value="Genomic_DNA"/>
</dbReference>
<dbReference type="EMBL" id="AY061162">
    <property type="protein sequence ID" value="AAL28710.1"/>
    <property type="molecule type" value="mRNA"/>
</dbReference>
<dbReference type="RefSeq" id="NP_648112.2">
    <property type="nucleotide sequence ID" value="NM_139855.4"/>
</dbReference>
<dbReference type="RefSeq" id="NP_729248.1">
    <property type="nucleotide sequence ID" value="NM_168210.3"/>
</dbReference>
<dbReference type="SMR" id="Q9NFP5"/>
<dbReference type="BioGRID" id="64260">
    <property type="interactions" value="97"/>
</dbReference>
<dbReference type="FunCoup" id="Q9NFP5">
    <property type="interactions" value="421"/>
</dbReference>
<dbReference type="IntAct" id="Q9NFP5">
    <property type="interactions" value="205"/>
</dbReference>
<dbReference type="STRING" id="7227.FBpp0291704"/>
<dbReference type="iPTMnet" id="Q9NFP5"/>
<dbReference type="PaxDb" id="7227-FBpp0291704"/>
<dbReference type="DNASU" id="38820"/>
<dbReference type="EnsemblMetazoa" id="FBtr0076872">
    <property type="protein sequence ID" value="FBpp0076582"/>
    <property type="gene ID" value="FBgn0035772"/>
</dbReference>
<dbReference type="EnsemblMetazoa" id="FBtr0076873">
    <property type="protein sequence ID" value="FBpp0076583"/>
    <property type="gene ID" value="FBgn0035772"/>
</dbReference>
<dbReference type="GeneID" id="38820"/>
<dbReference type="KEGG" id="dme:Dmel_CG8582"/>
<dbReference type="UCSC" id="CG8582-RA">
    <property type="organism name" value="d. melanogaster"/>
</dbReference>
<dbReference type="AGR" id="FB:FBgn0035772"/>
<dbReference type="CTD" id="38820"/>
<dbReference type="FlyBase" id="FBgn0035772">
    <property type="gene designation" value="Sh3beta"/>
</dbReference>
<dbReference type="VEuPathDB" id="VectorBase:FBgn0035772"/>
<dbReference type="eggNOG" id="KOG4023">
    <property type="taxonomic scope" value="Eukaryota"/>
</dbReference>
<dbReference type="GeneTree" id="ENSGT00940000173996"/>
<dbReference type="HOGENOM" id="CLU_084862_1_1_1"/>
<dbReference type="InParanoid" id="Q9NFP5"/>
<dbReference type="OrthoDB" id="9932926at2759"/>
<dbReference type="PhylomeDB" id="Q9NFP5"/>
<dbReference type="BioGRID-ORCS" id="38820">
    <property type="hits" value="0 hits in 3 CRISPR screens"/>
</dbReference>
<dbReference type="ChiTaRS" id="Sh3beta">
    <property type="organism name" value="fly"/>
</dbReference>
<dbReference type="GenomeRNAi" id="38820"/>
<dbReference type="PRO" id="PR:Q9NFP5"/>
<dbReference type="Proteomes" id="UP000000803">
    <property type="component" value="Chromosome 3L"/>
</dbReference>
<dbReference type="Bgee" id="FBgn0035772">
    <property type="expression patterns" value="Expressed in wing disc and 274 other cell types or tissues"/>
</dbReference>
<dbReference type="ExpressionAtlas" id="Q9NFP5">
    <property type="expression patterns" value="baseline and differential"/>
</dbReference>
<dbReference type="GO" id="GO:0005737">
    <property type="term" value="C:cytoplasm"/>
    <property type="evidence" value="ECO:0000318"/>
    <property type="project" value="GO_Central"/>
</dbReference>
<dbReference type="GO" id="GO:0017124">
    <property type="term" value="F:SH3 domain binding"/>
    <property type="evidence" value="ECO:0007669"/>
    <property type="project" value="UniProtKB-KW"/>
</dbReference>
<dbReference type="CDD" id="cd03030">
    <property type="entry name" value="GRX_SH3BGR"/>
    <property type="match status" value="1"/>
</dbReference>
<dbReference type="Gene3D" id="3.40.30.10">
    <property type="entry name" value="Glutaredoxin"/>
    <property type="match status" value="1"/>
</dbReference>
<dbReference type="InterPro" id="IPR006993">
    <property type="entry name" value="Glut_rich_SH3-bd"/>
</dbReference>
<dbReference type="InterPro" id="IPR051033">
    <property type="entry name" value="SH3BGR"/>
</dbReference>
<dbReference type="InterPro" id="IPR036249">
    <property type="entry name" value="Thioredoxin-like_sf"/>
</dbReference>
<dbReference type="PANTHER" id="PTHR12232:SF15">
    <property type="entry name" value="SH3 DOMAIN-BINDING GLUTAMIC ACID-RICH PROTEIN HOMOLOG"/>
    <property type="match status" value="1"/>
</dbReference>
<dbReference type="PANTHER" id="PTHR12232">
    <property type="entry name" value="SH3 DOMAIN-BINDING GLUTAMIC ACID-RICH-LIKE PROTEIN"/>
    <property type="match status" value="1"/>
</dbReference>
<dbReference type="Pfam" id="PF04908">
    <property type="entry name" value="SH3BGR"/>
    <property type="match status" value="1"/>
</dbReference>
<dbReference type="SUPFAM" id="SSF52833">
    <property type="entry name" value="Thioredoxin-like"/>
    <property type="match status" value="1"/>
</dbReference>
<gene>
    <name type="primary">Sh3beta</name>
    <name type="synonym">SH3BGR</name>
    <name type="ORF">CG8582</name>
</gene>
<keyword id="KW-0597">Phosphoprotein</keyword>
<keyword id="KW-1185">Reference proteome</keyword>
<keyword id="KW-0729">SH3-binding</keyword>
<comment type="interaction">
    <interactant intactId="EBI-3431675">
        <id>Q9NFP5</id>
    </interactant>
    <interactant intactId="EBI-3429710">
        <id>Q9VY28</id>
        <label>mRpS25</label>
    </interactant>
    <organismsDiffer>false</organismsDiffer>
    <experiments>2</experiments>
</comment>
<comment type="similarity">
    <text evidence="4">Belongs to the SH3BGR family.</text>
</comment>
<accession>Q9NFP5</accession>
<accession>Q0E8H4</accession>
<accession>Q9VS58</accession>
<feature type="chain" id="PRO_0000220751" description="SH3 domain-binding glutamic acid-rich protein homolog">
    <location>
        <begin position="1"/>
        <end position="158"/>
    </location>
</feature>
<feature type="region of interest" description="Disordered" evidence="2">
    <location>
        <begin position="40"/>
        <end position="74"/>
    </location>
</feature>
<feature type="region of interest" description="Disordered" evidence="2">
    <location>
        <begin position="118"/>
        <end position="158"/>
    </location>
</feature>
<feature type="short sequence motif" description="SH3-binding" evidence="1">
    <location>
        <begin position="67"/>
        <end position="73"/>
    </location>
</feature>
<feature type="compositionally biased region" description="Basic and acidic residues" evidence="2">
    <location>
        <begin position="40"/>
        <end position="51"/>
    </location>
</feature>
<feature type="compositionally biased region" description="Polar residues" evidence="2">
    <location>
        <begin position="52"/>
        <end position="61"/>
    </location>
</feature>
<feature type="modified residue" description="Phosphothreonine" evidence="3">
    <location>
        <position position="109"/>
    </location>
</feature>
<feature type="sequence conflict" description="In Ref. 1; CAB76915." evidence="4" ref="1">
    <original>NK</original>
    <variation>LL</variation>
    <location>
        <begin position="13"/>
        <end position="14"/>
    </location>
</feature>
<feature type="sequence conflict" description="In Ref. 1; CAB76915." evidence="4" ref="1">
    <original>QQ</original>
    <variation>HE</variation>
    <location>
        <begin position="20"/>
        <end position="21"/>
    </location>
</feature>
<feature type="sequence conflict" description="In Ref. 1; CAB76915." evidence="4" ref="1">
    <original>D</original>
    <variation>V</variation>
    <location>
        <position position="64"/>
    </location>
</feature>
<name>SH3BG_DROME</name>
<proteinExistence type="evidence at protein level"/>
<organism>
    <name type="scientific">Drosophila melanogaster</name>
    <name type="common">Fruit fly</name>
    <dbReference type="NCBI Taxonomy" id="7227"/>
    <lineage>
        <taxon>Eukaryota</taxon>
        <taxon>Metazoa</taxon>
        <taxon>Ecdysozoa</taxon>
        <taxon>Arthropoda</taxon>
        <taxon>Hexapoda</taxon>
        <taxon>Insecta</taxon>
        <taxon>Pterygota</taxon>
        <taxon>Neoptera</taxon>
        <taxon>Endopterygota</taxon>
        <taxon>Diptera</taxon>
        <taxon>Brachycera</taxon>
        <taxon>Muscomorpha</taxon>
        <taxon>Ephydroidea</taxon>
        <taxon>Drosophilidae</taxon>
        <taxon>Drosophila</taxon>
        <taxon>Sophophora</taxon>
    </lineage>
</organism>
<sequence length="158" mass="17488">MVLKVYVSGMSGNKEVKKRQQRVLMILDSKNIKYDTVDITEPGKESEKELMQNKSTSNGGTVSDPEPRHPLPPQLFNDDEYCGDYDAFDMANEIDTLEVFLKLAPADTTAVSTAQIELKQENGDAKKEEAETEAEDKKTEAGDGDVDVKEEAAEKAEV</sequence>
<reference key="1">
    <citation type="submission" date="2000-03" db="EMBL/GenBank/DDBJ databases">
        <title>Cloning of the Drosophila Sh3bgr gene homolog of human Sh3bgr gene.</title>
        <authorList>
            <person name="Scartezzini P."/>
            <person name="Egeo A."/>
            <person name="Mazzocco M."/>
        </authorList>
    </citation>
    <scope>NUCLEOTIDE SEQUENCE [MRNA]</scope>
    <source>
        <tissue>Embryo</tissue>
    </source>
</reference>
<reference key="2">
    <citation type="journal article" date="2000" name="Science">
        <title>The genome sequence of Drosophila melanogaster.</title>
        <authorList>
            <person name="Adams M.D."/>
            <person name="Celniker S.E."/>
            <person name="Holt R.A."/>
            <person name="Evans C.A."/>
            <person name="Gocayne J.D."/>
            <person name="Amanatides P.G."/>
            <person name="Scherer S.E."/>
            <person name="Li P.W."/>
            <person name="Hoskins R.A."/>
            <person name="Galle R.F."/>
            <person name="George R.A."/>
            <person name="Lewis S.E."/>
            <person name="Richards S."/>
            <person name="Ashburner M."/>
            <person name="Henderson S.N."/>
            <person name="Sutton G.G."/>
            <person name="Wortman J.R."/>
            <person name="Yandell M.D."/>
            <person name="Zhang Q."/>
            <person name="Chen L.X."/>
            <person name="Brandon R.C."/>
            <person name="Rogers Y.-H.C."/>
            <person name="Blazej R.G."/>
            <person name="Champe M."/>
            <person name="Pfeiffer B.D."/>
            <person name="Wan K.H."/>
            <person name="Doyle C."/>
            <person name="Baxter E.G."/>
            <person name="Helt G."/>
            <person name="Nelson C.R."/>
            <person name="Miklos G.L.G."/>
            <person name="Abril J.F."/>
            <person name="Agbayani A."/>
            <person name="An H.-J."/>
            <person name="Andrews-Pfannkoch C."/>
            <person name="Baldwin D."/>
            <person name="Ballew R.M."/>
            <person name="Basu A."/>
            <person name="Baxendale J."/>
            <person name="Bayraktaroglu L."/>
            <person name="Beasley E.M."/>
            <person name="Beeson K.Y."/>
            <person name="Benos P.V."/>
            <person name="Berman B.P."/>
            <person name="Bhandari D."/>
            <person name="Bolshakov S."/>
            <person name="Borkova D."/>
            <person name="Botchan M.R."/>
            <person name="Bouck J."/>
            <person name="Brokstein P."/>
            <person name="Brottier P."/>
            <person name="Burtis K.C."/>
            <person name="Busam D.A."/>
            <person name="Butler H."/>
            <person name="Cadieu E."/>
            <person name="Center A."/>
            <person name="Chandra I."/>
            <person name="Cherry J.M."/>
            <person name="Cawley S."/>
            <person name="Dahlke C."/>
            <person name="Davenport L.B."/>
            <person name="Davies P."/>
            <person name="de Pablos B."/>
            <person name="Delcher A."/>
            <person name="Deng Z."/>
            <person name="Mays A.D."/>
            <person name="Dew I."/>
            <person name="Dietz S.M."/>
            <person name="Dodson K."/>
            <person name="Doup L.E."/>
            <person name="Downes M."/>
            <person name="Dugan-Rocha S."/>
            <person name="Dunkov B.C."/>
            <person name="Dunn P."/>
            <person name="Durbin K.J."/>
            <person name="Evangelista C.C."/>
            <person name="Ferraz C."/>
            <person name="Ferriera S."/>
            <person name="Fleischmann W."/>
            <person name="Fosler C."/>
            <person name="Gabrielian A.E."/>
            <person name="Garg N.S."/>
            <person name="Gelbart W.M."/>
            <person name="Glasser K."/>
            <person name="Glodek A."/>
            <person name="Gong F."/>
            <person name="Gorrell J.H."/>
            <person name="Gu Z."/>
            <person name="Guan P."/>
            <person name="Harris M."/>
            <person name="Harris N.L."/>
            <person name="Harvey D.A."/>
            <person name="Heiman T.J."/>
            <person name="Hernandez J.R."/>
            <person name="Houck J."/>
            <person name="Hostin D."/>
            <person name="Houston K.A."/>
            <person name="Howland T.J."/>
            <person name="Wei M.-H."/>
            <person name="Ibegwam C."/>
            <person name="Jalali M."/>
            <person name="Kalush F."/>
            <person name="Karpen G.H."/>
            <person name="Ke Z."/>
            <person name="Kennison J.A."/>
            <person name="Ketchum K.A."/>
            <person name="Kimmel B.E."/>
            <person name="Kodira C.D."/>
            <person name="Kraft C.L."/>
            <person name="Kravitz S."/>
            <person name="Kulp D."/>
            <person name="Lai Z."/>
            <person name="Lasko P."/>
            <person name="Lei Y."/>
            <person name="Levitsky A.A."/>
            <person name="Li J.H."/>
            <person name="Li Z."/>
            <person name="Liang Y."/>
            <person name="Lin X."/>
            <person name="Liu X."/>
            <person name="Mattei B."/>
            <person name="McIntosh T.C."/>
            <person name="McLeod M.P."/>
            <person name="McPherson D."/>
            <person name="Merkulov G."/>
            <person name="Milshina N.V."/>
            <person name="Mobarry C."/>
            <person name="Morris J."/>
            <person name="Moshrefi A."/>
            <person name="Mount S.M."/>
            <person name="Moy M."/>
            <person name="Murphy B."/>
            <person name="Murphy L."/>
            <person name="Muzny D.M."/>
            <person name="Nelson D.L."/>
            <person name="Nelson D.R."/>
            <person name="Nelson K.A."/>
            <person name="Nixon K."/>
            <person name="Nusskern D.R."/>
            <person name="Pacleb J.M."/>
            <person name="Palazzolo M."/>
            <person name="Pittman G.S."/>
            <person name="Pan S."/>
            <person name="Pollard J."/>
            <person name="Puri V."/>
            <person name="Reese M.G."/>
            <person name="Reinert K."/>
            <person name="Remington K."/>
            <person name="Saunders R.D.C."/>
            <person name="Scheeler F."/>
            <person name="Shen H."/>
            <person name="Shue B.C."/>
            <person name="Siden-Kiamos I."/>
            <person name="Simpson M."/>
            <person name="Skupski M.P."/>
            <person name="Smith T.J."/>
            <person name="Spier E."/>
            <person name="Spradling A.C."/>
            <person name="Stapleton M."/>
            <person name="Strong R."/>
            <person name="Sun E."/>
            <person name="Svirskas R."/>
            <person name="Tector C."/>
            <person name="Turner R."/>
            <person name="Venter E."/>
            <person name="Wang A.H."/>
            <person name="Wang X."/>
            <person name="Wang Z.-Y."/>
            <person name="Wassarman D.A."/>
            <person name="Weinstock G.M."/>
            <person name="Weissenbach J."/>
            <person name="Williams S.M."/>
            <person name="Woodage T."/>
            <person name="Worley K.C."/>
            <person name="Wu D."/>
            <person name="Yang S."/>
            <person name="Yao Q.A."/>
            <person name="Ye J."/>
            <person name="Yeh R.-F."/>
            <person name="Zaveri J.S."/>
            <person name="Zhan M."/>
            <person name="Zhang G."/>
            <person name="Zhao Q."/>
            <person name="Zheng L."/>
            <person name="Zheng X.H."/>
            <person name="Zhong F.N."/>
            <person name="Zhong W."/>
            <person name="Zhou X."/>
            <person name="Zhu S.C."/>
            <person name="Zhu X."/>
            <person name="Smith H.O."/>
            <person name="Gibbs R.A."/>
            <person name="Myers E.W."/>
            <person name="Rubin G.M."/>
            <person name="Venter J.C."/>
        </authorList>
    </citation>
    <scope>NUCLEOTIDE SEQUENCE [LARGE SCALE GENOMIC DNA]</scope>
    <source>
        <strain>Berkeley</strain>
    </source>
</reference>
<reference key="3">
    <citation type="journal article" date="2002" name="Genome Biol.">
        <title>Annotation of the Drosophila melanogaster euchromatic genome: a systematic review.</title>
        <authorList>
            <person name="Misra S."/>
            <person name="Crosby M.A."/>
            <person name="Mungall C.J."/>
            <person name="Matthews B.B."/>
            <person name="Campbell K.S."/>
            <person name="Hradecky P."/>
            <person name="Huang Y."/>
            <person name="Kaminker J.S."/>
            <person name="Millburn G.H."/>
            <person name="Prochnik S.E."/>
            <person name="Smith C.D."/>
            <person name="Tupy J.L."/>
            <person name="Whitfield E.J."/>
            <person name="Bayraktaroglu L."/>
            <person name="Berman B.P."/>
            <person name="Bettencourt B.R."/>
            <person name="Celniker S.E."/>
            <person name="de Grey A.D.N.J."/>
            <person name="Drysdale R.A."/>
            <person name="Harris N.L."/>
            <person name="Richter J."/>
            <person name="Russo S."/>
            <person name="Schroeder A.J."/>
            <person name="Shu S.Q."/>
            <person name="Stapleton M."/>
            <person name="Yamada C."/>
            <person name="Ashburner M."/>
            <person name="Gelbart W.M."/>
            <person name="Rubin G.M."/>
            <person name="Lewis S.E."/>
        </authorList>
    </citation>
    <scope>GENOME REANNOTATION</scope>
    <source>
        <strain>Berkeley</strain>
    </source>
</reference>
<reference key="4">
    <citation type="journal article" date="2002" name="Genome Biol.">
        <title>A Drosophila full-length cDNA resource.</title>
        <authorList>
            <person name="Stapleton M."/>
            <person name="Carlson J.W."/>
            <person name="Brokstein P."/>
            <person name="Yu C."/>
            <person name="Champe M."/>
            <person name="George R.A."/>
            <person name="Guarin H."/>
            <person name="Kronmiller B."/>
            <person name="Pacleb J.M."/>
            <person name="Park S."/>
            <person name="Wan K.H."/>
            <person name="Rubin G.M."/>
            <person name="Celniker S.E."/>
        </authorList>
    </citation>
    <scope>NUCLEOTIDE SEQUENCE [LARGE SCALE MRNA]</scope>
    <source>
        <strain>Berkeley</strain>
    </source>
</reference>
<reference key="5">
    <citation type="journal article" date="2007" name="Mol. Biosyst.">
        <title>An integrated chemical, mass spectrometric and computational strategy for (quantitative) phosphoproteomics: application to Drosophila melanogaster Kc167 cells.</title>
        <authorList>
            <person name="Bodenmiller B."/>
            <person name="Mueller L.N."/>
            <person name="Pedrioli P.G.A."/>
            <person name="Pflieger D."/>
            <person name="Juenger M.A."/>
            <person name="Eng J.K."/>
            <person name="Aebersold R."/>
            <person name="Tao W.A."/>
        </authorList>
    </citation>
    <scope>PHOSPHORYLATION [LARGE SCALE ANALYSIS] AT THR-109</scope>
    <scope>IDENTIFICATION BY MASS SPECTROMETRY</scope>
</reference>